<comment type="function">
    <text evidence="2">Part of the dynactin complex that activates the molecular motor dynein for ultra-processive transport along microtubules.</text>
</comment>
<comment type="subunit">
    <text evidence="1 2 3">Subunit of dynactin, a multiprotein complex part of a tripartite complex with dynein and a adapter, such as BICDL1, BICD2 or HOOK3. The dynactin complex is built around ACTR1A/ACTB filament and consists of an actin-related filament composed of a shoulder domain, a pointed end and a barbed end. Its length is defined by its flexible shoulder domain. The soulder is composed of 2 DCTN1 subunits, 4 DCTN2 and 2 DCTN3. The 4 DCNT2 (via N-terminus) bind the ACTR1A filament and act as molecular rulers to determine the length. The pointed end is important for binding dynein-dynactin cargo adapters. Consists of 4 subunits: ACTR10, DCNT4, DCTN5 and DCTN6. Within the complex DCTN6 forms a heterodimer with DCTN5 (By similarity). The barbed end is composed of a CAPZA1:CAPZB heterodimers, which binds ACTR1A/ACTB filament and dynactin and stabilizes dynactin (By similarity). Interacts with N4BP2L1 (By similarity).</text>
</comment>
<comment type="subcellular location">
    <subcellularLocation>
        <location evidence="1">Cytoplasm</location>
        <location evidence="1">Cytoskeleton</location>
    </subcellularLocation>
    <subcellularLocation>
        <location evidence="2">Chromosome</location>
        <location evidence="2">Centromere</location>
        <location evidence="2">Kinetochore</location>
    </subcellularLocation>
</comment>
<comment type="similarity">
    <text evidence="4">Belongs to the dynactin subunits 5/6 family. Dynactin subunit 5 subfamily.</text>
</comment>
<evidence type="ECO:0000250" key="1">
    <source>
        <dbReference type="UniProtKB" id="A0A286ZK88"/>
    </source>
</evidence>
<evidence type="ECO:0000250" key="2">
    <source>
        <dbReference type="UniProtKB" id="Q9BTE1"/>
    </source>
</evidence>
<evidence type="ECO:0000250" key="3">
    <source>
        <dbReference type="UniProtKB" id="Q9QZB9"/>
    </source>
</evidence>
<evidence type="ECO:0000305" key="4"/>
<accession>Q5R559</accession>
<sequence>MELGELLYNKSEYIETASGNKVSRQSVLCGSQNIVLNGKTIVMNDCIIRGDLANVRVGRHCVVKSRSVIRPPFKKFSKGVAFFPLHIGDHVFIEEDCVVNAAQIGSYVHVGKNCVIGRRCVLKDCCKILDNTVLPPETVVPPFTVFSGCPGLFSGELPECTQELMIDVTKSYYQKFLPLTRI</sequence>
<proteinExistence type="evidence at transcript level"/>
<dbReference type="EMBL" id="CR861010">
    <property type="protein sequence ID" value="CAH93107.1"/>
    <property type="molecule type" value="mRNA"/>
</dbReference>
<dbReference type="RefSeq" id="NP_001126840.1">
    <property type="nucleotide sequence ID" value="NM_001133368.1"/>
</dbReference>
<dbReference type="SMR" id="Q5R559"/>
<dbReference type="STRING" id="9601.ENSPPYP00000008135"/>
<dbReference type="GeneID" id="100173847"/>
<dbReference type="KEGG" id="pon:100173847"/>
<dbReference type="CTD" id="84516"/>
<dbReference type="eggNOG" id="KOG3121">
    <property type="taxonomic scope" value="Eukaryota"/>
</dbReference>
<dbReference type="InParanoid" id="Q5R559"/>
<dbReference type="OrthoDB" id="417208at2759"/>
<dbReference type="Proteomes" id="UP000001595">
    <property type="component" value="Unplaced"/>
</dbReference>
<dbReference type="GO" id="GO:0005737">
    <property type="term" value="C:cytoplasm"/>
    <property type="evidence" value="ECO:0007669"/>
    <property type="project" value="UniProtKB-KW"/>
</dbReference>
<dbReference type="GO" id="GO:0005869">
    <property type="term" value="C:dynactin complex"/>
    <property type="evidence" value="ECO:0007669"/>
    <property type="project" value="TreeGrafter"/>
</dbReference>
<dbReference type="GO" id="GO:0000776">
    <property type="term" value="C:kinetochore"/>
    <property type="evidence" value="ECO:0007669"/>
    <property type="project" value="UniProtKB-KW"/>
</dbReference>
<dbReference type="CDD" id="cd03359">
    <property type="entry name" value="LbH_Dynactin_5"/>
    <property type="match status" value="1"/>
</dbReference>
<dbReference type="FunFam" id="2.160.10.10:FF:000014">
    <property type="entry name" value="dynactin subunit 5"/>
    <property type="match status" value="1"/>
</dbReference>
<dbReference type="Gene3D" id="2.160.10.10">
    <property type="entry name" value="Hexapeptide repeat proteins"/>
    <property type="match status" value="1"/>
</dbReference>
<dbReference type="InterPro" id="IPR047125">
    <property type="entry name" value="DCTN5"/>
</dbReference>
<dbReference type="InterPro" id="IPR011004">
    <property type="entry name" value="Trimer_LpxA-like_sf"/>
</dbReference>
<dbReference type="PANTHER" id="PTHR46126">
    <property type="entry name" value="DYNACTIN SUBUNIT 5"/>
    <property type="match status" value="1"/>
</dbReference>
<dbReference type="PANTHER" id="PTHR46126:SF1">
    <property type="entry name" value="DYNACTIN SUBUNIT 5"/>
    <property type="match status" value="1"/>
</dbReference>
<dbReference type="Pfam" id="PF21711">
    <property type="entry name" value="DCTN5"/>
    <property type="match status" value="1"/>
</dbReference>
<dbReference type="SUPFAM" id="SSF51161">
    <property type="entry name" value="Trimeric LpxA-like enzymes"/>
    <property type="match status" value="1"/>
</dbReference>
<gene>
    <name type="primary">DCTN5</name>
</gene>
<name>DCTN5_PONAB</name>
<keyword id="KW-0007">Acetylation</keyword>
<keyword id="KW-0137">Centromere</keyword>
<keyword id="KW-0158">Chromosome</keyword>
<keyword id="KW-0963">Cytoplasm</keyword>
<keyword id="KW-0206">Cytoskeleton</keyword>
<keyword id="KW-0995">Kinetochore</keyword>
<keyword id="KW-1185">Reference proteome</keyword>
<protein>
    <recommendedName>
        <fullName>Dynactin subunit 5</fullName>
    </recommendedName>
    <alternativeName>
        <fullName>Dynactin subunit p25</fullName>
    </alternativeName>
</protein>
<feature type="chain" id="PRO_0000079829" description="Dynactin subunit 5">
    <location>
        <begin position="1"/>
        <end position="182"/>
    </location>
</feature>
<feature type="modified residue" description="N-acetylmethionine" evidence="2">
    <location>
        <position position="1"/>
    </location>
</feature>
<reference key="1">
    <citation type="submission" date="2004-11" db="EMBL/GenBank/DDBJ databases">
        <authorList>
            <consortium name="The German cDNA consortium"/>
        </authorList>
    </citation>
    <scope>NUCLEOTIDE SEQUENCE [LARGE SCALE MRNA]</scope>
    <source>
        <tissue>Brain cortex</tissue>
    </source>
</reference>
<organism>
    <name type="scientific">Pongo abelii</name>
    <name type="common">Sumatran orangutan</name>
    <name type="synonym">Pongo pygmaeus abelii</name>
    <dbReference type="NCBI Taxonomy" id="9601"/>
    <lineage>
        <taxon>Eukaryota</taxon>
        <taxon>Metazoa</taxon>
        <taxon>Chordata</taxon>
        <taxon>Craniata</taxon>
        <taxon>Vertebrata</taxon>
        <taxon>Euteleostomi</taxon>
        <taxon>Mammalia</taxon>
        <taxon>Eutheria</taxon>
        <taxon>Euarchontoglires</taxon>
        <taxon>Primates</taxon>
        <taxon>Haplorrhini</taxon>
        <taxon>Catarrhini</taxon>
        <taxon>Hominidae</taxon>
        <taxon>Pongo</taxon>
    </lineage>
</organism>